<evidence type="ECO:0000255" key="1">
    <source>
        <dbReference type="PROSITE-ProRule" id="PRU00227"/>
    </source>
</evidence>
<evidence type="ECO:0000256" key="2">
    <source>
        <dbReference type="SAM" id="MobiDB-lite"/>
    </source>
</evidence>
<evidence type="ECO:0000269" key="3">
    <source>
    </source>
</evidence>
<evidence type="ECO:0000303" key="4">
    <source>
    </source>
</evidence>
<dbReference type="EMBL" id="KU963195">
    <property type="protein sequence ID" value="APC57602.1"/>
    <property type="molecule type" value="Genomic_DNA"/>
</dbReference>
<dbReference type="EMBL" id="KI912110">
    <property type="protein sequence ID" value="ETS86023.1"/>
    <property type="molecule type" value="Genomic_DNA"/>
</dbReference>
<dbReference type="RefSeq" id="XP_007830820.1">
    <property type="nucleotide sequence ID" value="XM_007832629.1"/>
</dbReference>
<dbReference type="GeneID" id="19269061"/>
<dbReference type="KEGG" id="pfy:PFICI_04048"/>
<dbReference type="eggNOG" id="ENOG502RF8N">
    <property type="taxonomic scope" value="Eukaryota"/>
</dbReference>
<dbReference type="HOGENOM" id="CLU_015502_0_1_1"/>
<dbReference type="InParanoid" id="A0A1J0HSL8"/>
<dbReference type="OMA" id="WDLFIID"/>
<dbReference type="OrthoDB" id="5367487at2759"/>
<dbReference type="Proteomes" id="UP000030651">
    <property type="component" value="Unassembled WGS sequence"/>
</dbReference>
<dbReference type="GO" id="GO:0005634">
    <property type="term" value="C:nucleus"/>
    <property type="evidence" value="ECO:0007669"/>
    <property type="project" value="UniProtKB-SubCell"/>
</dbReference>
<dbReference type="GO" id="GO:0003677">
    <property type="term" value="F:DNA binding"/>
    <property type="evidence" value="ECO:0007669"/>
    <property type="project" value="UniProtKB-KW"/>
</dbReference>
<dbReference type="GO" id="GO:0000981">
    <property type="term" value="F:DNA-binding transcription factor activity, RNA polymerase II-specific"/>
    <property type="evidence" value="ECO:0007669"/>
    <property type="project" value="InterPro"/>
</dbReference>
<dbReference type="GO" id="GO:0008270">
    <property type="term" value="F:zinc ion binding"/>
    <property type="evidence" value="ECO:0007669"/>
    <property type="project" value="InterPro"/>
</dbReference>
<dbReference type="GO" id="GO:0006351">
    <property type="term" value="P:DNA-templated transcription"/>
    <property type="evidence" value="ECO:0007669"/>
    <property type="project" value="InterPro"/>
</dbReference>
<dbReference type="CDD" id="cd12148">
    <property type="entry name" value="fungal_TF_MHR"/>
    <property type="match status" value="1"/>
</dbReference>
<dbReference type="CDD" id="cd00067">
    <property type="entry name" value="GAL4"/>
    <property type="match status" value="1"/>
</dbReference>
<dbReference type="Gene3D" id="4.10.240.10">
    <property type="entry name" value="Zn(2)-C6 fungal-type DNA-binding domain"/>
    <property type="match status" value="1"/>
</dbReference>
<dbReference type="InterPro" id="IPR007219">
    <property type="entry name" value="Transcription_factor_dom_fun"/>
</dbReference>
<dbReference type="InterPro" id="IPR036864">
    <property type="entry name" value="Zn2-C6_fun-type_DNA-bd_sf"/>
</dbReference>
<dbReference type="InterPro" id="IPR001138">
    <property type="entry name" value="Zn2Cys6_DnaBD"/>
</dbReference>
<dbReference type="PANTHER" id="PTHR47431:SF1">
    <property type="entry name" value="ZN(II)2CYS6 TRANSCRIPTION FACTOR (EUROFUNG)"/>
    <property type="match status" value="1"/>
</dbReference>
<dbReference type="PANTHER" id="PTHR47431">
    <property type="entry name" value="ZN(II)2CYS6 TRANSCRIPTION FACTOR (EUROFUNG)-RELATED"/>
    <property type="match status" value="1"/>
</dbReference>
<dbReference type="Pfam" id="PF04082">
    <property type="entry name" value="Fungal_trans"/>
    <property type="match status" value="1"/>
</dbReference>
<dbReference type="Pfam" id="PF00172">
    <property type="entry name" value="Zn_clus"/>
    <property type="match status" value="1"/>
</dbReference>
<dbReference type="SMART" id="SM00066">
    <property type="entry name" value="GAL4"/>
    <property type="match status" value="1"/>
</dbReference>
<dbReference type="SUPFAM" id="SSF57701">
    <property type="entry name" value="Zn2/Cys6 DNA-binding domain"/>
    <property type="match status" value="1"/>
</dbReference>
<dbReference type="PROSITE" id="PS00463">
    <property type="entry name" value="ZN2_CY6_FUNGAL_1"/>
    <property type="match status" value="1"/>
</dbReference>
<dbReference type="PROSITE" id="PS50048">
    <property type="entry name" value="ZN2_CY6_FUNGAL_2"/>
    <property type="match status" value="1"/>
</dbReference>
<accession>A0A1J0HSL8</accession>
<accession>W3XIY0</accession>
<proteinExistence type="evidence at protein level"/>
<gene>
    <name evidence="4" type="primary">iacK</name>
    <name type="ORF">PFICI_04048</name>
</gene>
<protein>
    <recommendedName>
        <fullName evidence="4">C6 finger domain transcription factor iacK</fullName>
    </recommendedName>
    <alternativeName>
        <fullName evidence="4">Iso-A82775C biosynthesis cluster protein K</fullName>
    </alternativeName>
</protein>
<sequence>MNTSPDYAQPGPNQFHHGAPSIYSSSSSNGVGGEVPITAQLLRGPPPPPPPPPTATATAATAAATTTTAAPSATGEPKQSGPTVPAACLACRSKHLKCDGGNPCARCQASESICQYVASRRGYKGPRRNGTQNPNKRHAAASDDGSPNSNGSNESCPMLLGAGVATPAAPSLSAFNPGLGIPETPMSTIGATPSYSGLQIYRQPYLDANGALVDINPRKAPQTIAERCIDSFYFHFFPGHPSVLPKDYLLRIAEQRNIEHLLAAMRWAGSLYFEVGPTRATFFEEAMRLMYAKDVPKDGFLVQAMLIVLVGLDGSCQQERARDILSDAERIAIEIGLFQRSFAAIHGQGIPVIEESWRRTWWDLFVVDGMVAGVHRQTNFLLFDIVADAGLPCEEHQYLAGTIPRPLYLDDFDNDIFSGEEYEFSSFAYRVASIRNLGRMMRLPESVFPGDNNVDRVENFLSNWRMHLPASKRDCLNKDMKLDEMMFQAWMINHACSIMLHQPLSQLDSSPARDVTSCAPYQMVRSGDTFNTHTRHIVTAAAEISKMVTYAVPITCHTHFFTCVLTLSSIVHLSKWALWFVQNDDDLRQQIRLNIGALNKLSTVWSAASRASGQVKGVAQEIFRSKKAAQQNNASFWVGFTQEEIISSMAADETIMSEINTMLEPVTTSG</sequence>
<name>IACK_PESFW</name>
<reference key="1">
    <citation type="journal article" date="2018" name="ACS Chem. Biol.">
        <title>Characterization of a prenyltransferase for iso-A82775C biosynthesis and generation of new congeners of chloropestolides.</title>
        <authorList>
            <person name="Pan Y."/>
            <person name="Liu L."/>
            <person name="Guan F."/>
            <person name="Li E."/>
            <person name="Jin J."/>
            <person name="Li J."/>
            <person name="Che Y."/>
            <person name="Liu G."/>
        </authorList>
    </citation>
    <scope>NUCLEOTIDE SEQUENCE [GENOMIC DNA]</scope>
    <scope>FUNCTION</scope>
    <scope>BIOTECHNOLOGY</scope>
    <source>
        <strain>W106-1 / CGMCC3.15140</strain>
    </source>
</reference>
<reference key="2">
    <citation type="journal article" date="2015" name="BMC Genomics">
        <title>Genomic and transcriptomic analysis of the endophytic fungus Pestalotiopsis fici reveals its lifestyle and high potential for synthesis of natural products.</title>
        <authorList>
            <person name="Wang X."/>
            <person name="Zhang X."/>
            <person name="Liu L."/>
            <person name="Xiang M."/>
            <person name="Wang W."/>
            <person name="Sun X."/>
            <person name="Che Y."/>
            <person name="Guo L."/>
            <person name="Liu G."/>
            <person name="Guo L."/>
            <person name="Wang C."/>
            <person name="Yin W.B."/>
            <person name="Stadler M."/>
            <person name="Zhang X."/>
            <person name="Liu X."/>
        </authorList>
    </citation>
    <scope>NUCLEOTIDE SEQUENCE [LARGE SCALE GENOMIC DNA]</scope>
    <source>
        <strain>W106-1 / CGMCC3.15140</strain>
    </source>
</reference>
<keyword id="KW-0238">DNA-binding</keyword>
<keyword id="KW-0479">Metal-binding</keyword>
<keyword id="KW-0539">Nucleus</keyword>
<keyword id="KW-1185">Reference proteome</keyword>
<keyword id="KW-0804">Transcription</keyword>
<keyword id="KW-0805">Transcription regulation</keyword>
<keyword id="KW-0862">Zinc</keyword>
<organism>
    <name type="scientific">Pestalotiopsis fici (strain W106-1 / CGMCC3.15140)</name>
    <dbReference type="NCBI Taxonomy" id="1229662"/>
    <lineage>
        <taxon>Eukaryota</taxon>
        <taxon>Fungi</taxon>
        <taxon>Dikarya</taxon>
        <taxon>Ascomycota</taxon>
        <taxon>Pezizomycotina</taxon>
        <taxon>Sordariomycetes</taxon>
        <taxon>Xylariomycetidae</taxon>
        <taxon>Amphisphaeriales</taxon>
        <taxon>Sporocadaceae</taxon>
        <taxon>Pestalotiopsis</taxon>
    </lineage>
</organism>
<feature type="chain" id="PRO_0000451381" description="C6 finger domain transcription factor iacK">
    <location>
        <begin position="1"/>
        <end position="670"/>
    </location>
</feature>
<feature type="DNA-binding region" description="Zn(2)-C6 fungal-type" evidence="1">
    <location>
        <begin position="88"/>
        <end position="114"/>
    </location>
</feature>
<feature type="region of interest" description="Disordered" evidence="2">
    <location>
        <begin position="1"/>
        <end position="84"/>
    </location>
</feature>
<feature type="region of interest" description="Disordered" evidence="2">
    <location>
        <begin position="122"/>
        <end position="157"/>
    </location>
</feature>
<feature type="compositionally biased region" description="Pro residues" evidence="2">
    <location>
        <begin position="44"/>
        <end position="54"/>
    </location>
</feature>
<feature type="compositionally biased region" description="Low complexity" evidence="2">
    <location>
        <begin position="55"/>
        <end position="74"/>
    </location>
</feature>
<feature type="compositionally biased region" description="Low complexity" evidence="2">
    <location>
        <begin position="142"/>
        <end position="155"/>
    </location>
</feature>
<comment type="function">
    <text evidence="3">Transcription factor; part of the gene cluster that mediates the biosynthesis of iso-A82775C, a enylepoxycyclohexane and biosynthetic precursor of the chloropestolide anticancer natural products.</text>
</comment>
<comment type="subcellular location">
    <subcellularLocation>
        <location evidence="1">Nucleus</location>
    </subcellularLocation>
</comment>
<comment type="biotechnology">
    <text evidence="3">Iso-A82775C is a precursor for the biosynthesis of the anticancer natural products chloropestolides A to E via a Diesls-Alder reaction with maldoxin (PubMed:29384350). In the absence of the prenyltransferase iacE, siccayne accumulates instead of iso-A82775C and can also be condensed with maldoxin to produce chloropestolides H to K, which show also antibacterial and anticancer properties (PubMed:29384350).</text>
</comment>